<organism>
    <name type="scientific">Streptomyces triostinicus</name>
    <dbReference type="NCBI Taxonomy" id="45399"/>
    <lineage>
        <taxon>Bacteria</taxon>
        <taxon>Bacillati</taxon>
        <taxon>Actinomycetota</taxon>
        <taxon>Actinomycetes</taxon>
        <taxon>Kitasatosporales</taxon>
        <taxon>Streptomycetaceae</taxon>
        <taxon>Streptomyces</taxon>
    </lineage>
</organism>
<evidence type="ECO:0000250" key="1"/>
<evidence type="ECO:0000269" key="2">
    <source>
    </source>
</evidence>
<evidence type="ECO:0000269" key="3">
    <source>
    </source>
</evidence>
<evidence type="ECO:0000305" key="4"/>
<proteinExistence type="evidence at protein level"/>
<protein>
    <recommendedName>
        <fullName>Triostin synthetase I</fullName>
        <shortName>TrsI</shortName>
        <ecNumber>6.3.2.-</ecNumber>
    </recommendedName>
    <alternativeName>
        <fullName>AMP-binding ligase</fullName>
    </alternativeName>
    <alternativeName>
        <fullName>Quinoxaline-2-carboxylic acid-activating enzyme</fullName>
    </alternativeName>
</protein>
<dbReference type="EC" id="6.3.2.-"/>
<dbReference type="EMBL" id="AY825941">
    <property type="protein sequence ID" value="AAV84073.1"/>
    <property type="status" value="ALT_FRAME"/>
    <property type="molecule type" value="Genomic_DNA"/>
</dbReference>
<dbReference type="EMBL" id="AB366635">
    <property type="protein sequence ID" value="BAH04171.1"/>
    <property type="molecule type" value="Genomic_DNA"/>
</dbReference>
<dbReference type="SMR" id="P80436"/>
<dbReference type="BioCyc" id="MetaCyc:MONOMER-19596"/>
<dbReference type="GO" id="GO:0016878">
    <property type="term" value="F:acid-thiol ligase activity"/>
    <property type="evidence" value="ECO:0007669"/>
    <property type="project" value="UniProtKB-ARBA"/>
</dbReference>
<dbReference type="GO" id="GO:0005524">
    <property type="term" value="F:ATP binding"/>
    <property type="evidence" value="ECO:0007669"/>
    <property type="project" value="UniProtKB-KW"/>
</dbReference>
<dbReference type="GO" id="GO:0017000">
    <property type="term" value="P:antibiotic biosynthetic process"/>
    <property type="evidence" value="ECO:0007669"/>
    <property type="project" value="UniProtKB-KW"/>
</dbReference>
<dbReference type="CDD" id="cd05920">
    <property type="entry name" value="23DHB-AMP_lg"/>
    <property type="match status" value="1"/>
</dbReference>
<dbReference type="FunFam" id="3.30.300.30:FF:000008">
    <property type="entry name" value="2,3-dihydroxybenzoate-AMP ligase"/>
    <property type="match status" value="1"/>
</dbReference>
<dbReference type="FunFam" id="2.30.38.10:FF:000003">
    <property type="entry name" value="Vibriobactin-specific 2,3-dihydroxybenzoate-AMP ligase"/>
    <property type="match status" value="1"/>
</dbReference>
<dbReference type="Gene3D" id="3.30.300.30">
    <property type="match status" value="1"/>
</dbReference>
<dbReference type="Gene3D" id="3.40.50.12780">
    <property type="entry name" value="N-terminal domain of ligase-like"/>
    <property type="match status" value="1"/>
</dbReference>
<dbReference type="InterPro" id="IPR025110">
    <property type="entry name" value="AMP-bd_C"/>
</dbReference>
<dbReference type="InterPro" id="IPR045851">
    <property type="entry name" value="AMP-bd_C_sf"/>
</dbReference>
<dbReference type="InterPro" id="IPR020845">
    <property type="entry name" value="AMP-binding_CS"/>
</dbReference>
<dbReference type="InterPro" id="IPR000873">
    <property type="entry name" value="AMP-dep_synth/lig_dom"/>
</dbReference>
<dbReference type="InterPro" id="IPR042099">
    <property type="entry name" value="ANL_N_sf"/>
</dbReference>
<dbReference type="InterPro" id="IPR050237">
    <property type="entry name" value="ATP-dep_AMP-bd_enzyme"/>
</dbReference>
<dbReference type="PANTHER" id="PTHR43767">
    <property type="entry name" value="LONG-CHAIN-FATTY-ACID--COA LIGASE"/>
    <property type="match status" value="1"/>
</dbReference>
<dbReference type="PANTHER" id="PTHR43767:SF1">
    <property type="entry name" value="NONRIBOSOMAL PEPTIDE SYNTHASE PES1 (EUROFUNG)-RELATED"/>
    <property type="match status" value="1"/>
</dbReference>
<dbReference type="Pfam" id="PF00501">
    <property type="entry name" value="AMP-binding"/>
    <property type="match status" value="1"/>
</dbReference>
<dbReference type="Pfam" id="PF13193">
    <property type="entry name" value="AMP-binding_C"/>
    <property type="match status" value="1"/>
</dbReference>
<dbReference type="SUPFAM" id="SSF56801">
    <property type="entry name" value="Acetyl-CoA synthetase-like"/>
    <property type="match status" value="1"/>
</dbReference>
<dbReference type="PROSITE" id="PS00455">
    <property type="entry name" value="AMP_BINDING"/>
    <property type="match status" value="1"/>
</dbReference>
<gene>
    <name type="primary">trsA</name>
</gene>
<name>TRS1_STRTI</name>
<reference key="1">
    <citation type="journal article" date="2005" name="J. Biol. Chem.">
        <title>Functional cross-talk between fatty acid synthesis and nonribosomal peptide synthesis in quinoxaline antibiotic-producing streptomycetes.</title>
        <authorList>
            <person name="Schmoock G."/>
            <person name="Pfennig F."/>
            <person name="Jewiarz J."/>
            <person name="Schlumbohm W."/>
            <person name="Laubinger W."/>
            <person name="Schauwecker F."/>
            <person name="Keller U."/>
        </authorList>
    </citation>
    <scope>NUCLEOTIDE SEQUENCE [GENOMIC DNA]</scope>
    <scope>PROTEIN SEQUENCE OF 1-24</scope>
    <scope>FUNCTION</scope>
    <source>
        <strain>ATCC 21043 / JCM 5046 / NBRC 13836</strain>
    </source>
</reference>
<reference key="2">
    <citation type="journal article" date="2008" name="Biotechnol. Prog.">
        <title>Complete sequence of biosynthetic gene cluster responsible for producing triostin A and evaluation of quinomycin-type antibiotics from Streptomyces triostinicus.</title>
        <authorList>
            <person name="Praseuth A.P."/>
            <person name="Wang C.C."/>
            <person name="Watanabe K."/>
            <person name="Hotta K."/>
            <person name="Oguri H."/>
            <person name="Oikawa H."/>
        </authorList>
    </citation>
    <scope>NUCLEOTIDE SEQUENCE [GENOMIC DNA]</scope>
    <source>
        <strain>ATCC 21043 / JCM 5046 / NBRC 13836</strain>
    </source>
</reference>
<reference key="3">
    <citation type="journal article" date="1990" name="Biochemistry">
        <title>Biosynthesis of quinoxaline antibiotics: purification and characterization of the quinoxaline-2-carboxylic acid activating enzyme from Streptomyces triostinicus.</title>
        <authorList>
            <person name="Glund K."/>
            <person name="Schlumbohm W."/>
            <person name="Bapat M."/>
            <person name="Keller U."/>
        </authorList>
    </citation>
    <scope>FUNCTION</scope>
    <scope>BIOPHYSICOCHEMICAL PROPERTIES</scope>
    <scope>SUBUNIT</scope>
</reference>
<sequence>MLDGFVPWPDHLADEYRRRGIWLGRPLGDLLHDSCRRHADRVAVVCDGHRMTYAELSRRADRLAGGLIGLGIRPLDRVVVHLPNIPEFVVLVFALLRAGAIPVLALPGHRKSEISHLCAHSGAVAYAVKDEFGGFDYRELAREIPPVRHVLVSGDAQEFTALESVGGDDVPLPRVDPSDPALFLLSGGTTGLPKLIPRAHDDYAYVMRATAEAMHVGEEVAYLAVNPVAHQAALACPGVFGSLLLGGKAVLTSSVRPDEVFPLIRREHVTVTTVVPSVLRLWADSGQRPDLSHLLVQVGSAPLDPALARRAGEVLGCRIMRWYGISEGLLTHTRFDDPEDVIMGTDGRPMSRDDEVRIVDESLNPVPEGEAGEMIARGPYTIRGYYRAPEENTRSFTPDGFFRTGDLVRRSPEGDITIVGRIKDVINRAGEKVSAEEVERQLRTHPSVQDAAVVGVPDTVLGERTYAFLVLTGAQIRTSAVKEFLRGCGLATYKIPDRIVPLDQLPRTPMGKVDKKTLRALAVSSAR</sequence>
<comment type="function">
    <text evidence="2 3">Involved in triostin biosynthesis. Activates quinoxaline-2-carboxylic acid (QA) via catalysis of the ATP-pyrophosphate exchange reaction dependent on QA, and the formation of the corresponding adenylate. Also activates structural analogs of QA such as quinoline-2-carboxylic acid and thieno[3,2-b]pyridine-5-carboxylic acid, but not quinoline-3-carboxylic acid, quinoline-4-carboxylic acid, pyridine-2-carboxylic acid or 2-pyrazinecarboxylic acid.</text>
</comment>
<comment type="biophysicochemical properties">
    <phDependence>
        <text evidence="3">Optimum pH is 7.0-9.0.</text>
    </phDependence>
</comment>
<comment type="subunit">
    <text evidence="3">Monomer.</text>
</comment>
<comment type="similarity">
    <text evidence="4">Belongs to the ATP-dependent AMP-binding enzyme family.</text>
</comment>
<comment type="sequence caution" evidence="4">
    <conflict type="frameshift">
        <sequence resource="EMBL-CDS" id="AAV84073"/>
    </conflict>
</comment>
<feature type="chain" id="PRO_0000089392" description="Triostin synthetase I">
    <location>
        <begin position="1"/>
        <end position="527"/>
    </location>
</feature>
<feature type="binding site" evidence="1">
    <location>
        <begin position="187"/>
        <end position="188"/>
    </location>
    <ligand>
        <name>ATP</name>
        <dbReference type="ChEBI" id="CHEBI:30616"/>
    </ligand>
</feature>
<feature type="binding site" evidence="1">
    <location>
        <begin position="230"/>
        <end position="231"/>
    </location>
    <ligand>
        <name>substrate</name>
    </ligand>
</feature>
<feature type="binding site" evidence="1">
    <location>
        <begin position="300"/>
        <end position="302"/>
    </location>
    <ligand>
        <name>ATP</name>
        <dbReference type="ChEBI" id="CHEBI:30616"/>
    </ligand>
</feature>
<feature type="binding site" evidence="1">
    <location>
        <position position="406"/>
    </location>
    <ligand>
        <name>ATP</name>
        <dbReference type="ChEBI" id="CHEBI:30616"/>
    </ligand>
</feature>
<feature type="binding site" evidence="1">
    <location>
        <position position="421"/>
    </location>
    <ligand>
        <name>ATP</name>
        <dbReference type="ChEBI" id="CHEBI:30616"/>
    </ligand>
</feature>
<feature type="binding site" evidence="1">
    <location>
        <position position="512"/>
    </location>
    <ligand>
        <name>ATP</name>
        <dbReference type="ChEBI" id="CHEBI:30616"/>
    </ligand>
</feature>
<feature type="binding site" evidence="1">
    <location>
        <position position="512"/>
    </location>
    <ligand>
        <name>substrate</name>
    </ligand>
</feature>
<feature type="sequence conflict" description="In Ref. 1; AAV84073." evidence="4" ref="1">
    <original>SPE</original>
    <variation>TRR</variation>
    <location>
        <begin position="411"/>
        <end position="413"/>
    </location>
</feature>
<keyword id="KW-0045">Antibiotic biosynthesis</keyword>
<keyword id="KW-0067">ATP-binding</keyword>
<keyword id="KW-0903">Direct protein sequencing</keyword>
<keyword id="KW-0436">Ligase</keyword>
<keyword id="KW-0547">Nucleotide-binding</keyword>
<accession>P80436</accession>
<accession>B7X8E6</accession>
<accession>Q5PT48</accession>